<feature type="chain" id="PRO_0000345757" description="tRNA modification GTPase MnmE">
    <location>
        <begin position="1"/>
        <end position="444"/>
    </location>
</feature>
<feature type="domain" description="TrmE-type G">
    <location>
        <begin position="216"/>
        <end position="365"/>
    </location>
</feature>
<feature type="binding site" evidence="1">
    <location>
        <position position="23"/>
    </location>
    <ligand>
        <name>(6S)-5-formyl-5,6,7,8-tetrahydrofolate</name>
        <dbReference type="ChEBI" id="CHEBI:57457"/>
    </ligand>
</feature>
<feature type="binding site" evidence="1">
    <location>
        <position position="82"/>
    </location>
    <ligand>
        <name>(6S)-5-formyl-5,6,7,8-tetrahydrofolate</name>
        <dbReference type="ChEBI" id="CHEBI:57457"/>
    </ligand>
</feature>
<feature type="binding site" evidence="1">
    <location>
        <position position="121"/>
    </location>
    <ligand>
        <name>(6S)-5-formyl-5,6,7,8-tetrahydrofolate</name>
        <dbReference type="ChEBI" id="CHEBI:57457"/>
    </ligand>
</feature>
<feature type="binding site" evidence="1">
    <location>
        <begin position="226"/>
        <end position="231"/>
    </location>
    <ligand>
        <name>GTP</name>
        <dbReference type="ChEBI" id="CHEBI:37565"/>
    </ligand>
</feature>
<feature type="binding site" evidence="1">
    <location>
        <position position="226"/>
    </location>
    <ligand>
        <name>K(+)</name>
        <dbReference type="ChEBI" id="CHEBI:29103"/>
    </ligand>
</feature>
<feature type="binding site" evidence="1">
    <location>
        <position position="230"/>
    </location>
    <ligand>
        <name>Mg(2+)</name>
        <dbReference type="ChEBI" id="CHEBI:18420"/>
    </ligand>
</feature>
<feature type="binding site" evidence="1">
    <location>
        <begin position="245"/>
        <end position="251"/>
    </location>
    <ligand>
        <name>GTP</name>
        <dbReference type="ChEBI" id="CHEBI:37565"/>
    </ligand>
</feature>
<feature type="binding site" evidence="1">
    <location>
        <position position="245"/>
    </location>
    <ligand>
        <name>K(+)</name>
        <dbReference type="ChEBI" id="CHEBI:29103"/>
    </ligand>
</feature>
<feature type="binding site" evidence="1">
    <location>
        <position position="247"/>
    </location>
    <ligand>
        <name>K(+)</name>
        <dbReference type="ChEBI" id="CHEBI:29103"/>
    </ligand>
</feature>
<feature type="binding site" evidence="1">
    <location>
        <position position="250"/>
    </location>
    <ligand>
        <name>K(+)</name>
        <dbReference type="ChEBI" id="CHEBI:29103"/>
    </ligand>
</feature>
<feature type="binding site" evidence="1">
    <location>
        <position position="251"/>
    </location>
    <ligand>
        <name>Mg(2+)</name>
        <dbReference type="ChEBI" id="CHEBI:18420"/>
    </ligand>
</feature>
<feature type="binding site" evidence="1">
    <location>
        <begin position="270"/>
        <end position="273"/>
    </location>
    <ligand>
        <name>GTP</name>
        <dbReference type="ChEBI" id="CHEBI:37565"/>
    </ligand>
</feature>
<feature type="binding site" evidence="1">
    <location>
        <position position="444"/>
    </location>
    <ligand>
        <name>(6S)-5-formyl-5,6,7,8-tetrahydrofolate</name>
        <dbReference type="ChEBI" id="CHEBI:57457"/>
    </ligand>
</feature>
<sequence length="444" mass="48098">MLRNDTITAIATPPGEGSIAIVRVSGPDAISISDRIFSGNIAGYASHTAHLGTVSHNAVCIDQALVLVMRAPRSFTGEDIVEFQCHGGYFACSQIVNALLAEGARAALPGEFSQRAFLNGKIDLIQAEAIQQLIAADNIDAFRIAQNQFQGHTSQAISSISSLIIEALAYIEVLADFPEEDIETEDSLPKHRIMEALSITDELLSSFDEGQRLAQGTSIVLAGLPNAGKSSILNALTQKNRAIVTDIPGTTRDILEENWVLQGKNLRLIDSAGLRETENLVEKEGIARAREAMSQAEGILWVVDASQPLPEFPTILYQKPTILLWNKCDIVSPPQIEVPFQQISVSAKTGEGLLELKQALQKWLNTTQLGKSSKIFLVSARHHSLLHSVYTCLTAALNGFTEHLPNECIALDLRQALHSIGNLSGSEVTENVLGEIFSKFCIGK</sequence>
<proteinExistence type="inferred from homology"/>
<name>MNME_CHLT2</name>
<organism>
    <name type="scientific">Chlamydia trachomatis serovar L2 (strain ATCC VR-902B / DSM 19102 / 434/Bu)</name>
    <dbReference type="NCBI Taxonomy" id="471472"/>
    <lineage>
        <taxon>Bacteria</taxon>
        <taxon>Pseudomonadati</taxon>
        <taxon>Chlamydiota</taxon>
        <taxon>Chlamydiia</taxon>
        <taxon>Chlamydiales</taxon>
        <taxon>Chlamydiaceae</taxon>
        <taxon>Chlamydia/Chlamydophila group</taxon>
        <taxon>Chlamydia</taxon>
    </lineage>
</organism>
<accession>B0B8S4</accession>
<dbReference type="EC" id="3.6.-.-" evidence="1"/>
<dbReference type="EMBL" id="AM884176">
    <property type="protein sequence ID" value="CAP03511.1"/>
    <property type="molecule type" value="Genomic_DNA"/>
</dbReference>
<dbReference type="RefSeq" id="WP_009872073.1">
    <property type="nucleotide sequence ID" value="NC_010287.1"/>
</dbReference>
<dbReference type="RefSeq" id="YP_001654158.1">
    <property type="nucleotide sequence ID" value="NC_010287.1"/>
</dbReference>
<dbReference type="SMR" id="B0B8S4"/>
<dbReference type="KEGG" id="ctb:CTL0067"/>
<dbReference type="PATRIC" id="fig|471472.4.peg.72"/>
<dbReference type="HOGENOM" id="CLU_019624_4_1_0"/>
<dbReference type="Proteomes" id="UP001154402">
    <property type="component" value="Chromosome"/>
</dbReference>
<dbReference type="GO" id="GO:0005829">
    <property type="term" value="C:cytosol"/>
    <property type="evidence" value="ECO:0007669"/>
    <property type="project" value="TreeGrafter"/>
</dbReference>
<dbReference type="GO" id="GO:0005525">
    <property type="term" value="F:GTP binding"/>
    <property type="evidence" value="ECO:0007669"/>
    <property type="project" value="UniProtKB-UniRule"/>
</dbReference>
<dbReference type="GO" id="GO:0003924">
    <property type="term" value="F:GTPase activity"/>
    <property type="evidence" value="ECO:0007669"/>
    <property type="project" value="UniProtKB-UniRule"/>
</dbReference>
<dbReference type="GO" id="GO:0046872">
    <property type="term" value="F:metal ion binding"/>
    <property type="evidence" value="ECO:0007669"/>
    <property type="project" value="UniProtKB-KW"/>
</dbReference>
<dbReference type="GO" id="GO:0030488">
    <property type="term" value="P:tRNA methylation"/>
    <property type="evidence" value="ECO:0007669"/>
    <property type="project" value="TreeGrafter"/>
</dbReference>
<dbReference type="GO" id="GO:0002098">
    <property type="term" value="P:tRNA wobble uridine modification"/>
    <property type="evidence" value="ECO:0007669"/>
    <property type="project" value="TreeGrafter"/>
</dbReference>
<dbReference type="CDD" id="cd04164">
    <property type="entry name" value="trmE"/>
    <property type="match status" value="1"/>
</dbReference>
<dbReference type="CDD" id="cd14858">
    <property type="entry name" value="TrmE_N"/>
    <property type="match status" value="1"/>
</dbReference>
<dbReference type="FunFam" id="3.30.1360.120:FF:000003">
    <property type="entry name" value="tRNA modification GTPase MnmE"/>
    <property type="match status" value="1"/>
</dbReference>
<dbReference type="FunFam" id="3.40.50.300:FF:001376">
    <property type="entry name" value="tRNA modification GTPase MnmE"/>
    <property type="match status" value="1"/>
</dbReference>
<dbReference type="Gene3D" id="3.40.50.300">
    <property type="entry name" value="P-loop containing nucleotide triphosphate hydrolases"/>
    <property type="match status" value="1"/>
</dbReference>
<dbReference type="Gene3D" id="3.30.1360.120">
    <property type="entry name" value="Probable tRNA modification gtpase trme, domain 1"/>
    <property type="match status" value="1"/>
</dbReference>
<dbReference type="Gene3D" id="1.20.120.430">
    <property type="entry name" value="tRNA modification GTPase MnmE domain 2"/>
    <property type="match status" value="1"/>
</dbReference>
<dbReference type="HAMAP" id="MF_00379">
    <property type="entry name" value="GTPase_MnmE"/>
    <property type="match status" value="1"/>
</dbReference>
<dbReference type="InterPro" id="IPR031168">
    <property type="entry name" value="G_TrmE"/>
</dbReference>
<dbReference type="InterPro" id="IPR006073">
    <property type="entry name" value="GTP-bd"/>
</dbReference>
<dbReference type="InterPro" id="IPR018948">
    <property type="entry name" value="GTP-bd_TrmE_N"/>
</dbReference>
<dbReference type="InterPro" id="IPR004520">
    <property type="entry name" value="GTPase_MnmE"/>
</dbReference>
<dbReference type="InterPro" id="IPR027368">
    <property type="entry name" value="MnmE_dom2"/>
</dbReference>
<dbReference type="InterPro" id="IPR025867">
    <property type="entry name" value="MnmE_helical"/>
</dbReference>
<dbReference type="InterPro" id="IPR027417">
    <property type="entry name" value="P-loop_NTPase"/>
</dbReference>
<dbReference type="InterPro" id="IPR005225">
    <property type="entry name" value="Small_GTP-bd"/>
</dbReference>
<dbReference type="InterPro" id="IPR027266">
    <property type="entry name" value="TrmE/GcvT_dom1"/>
</dbReference>
<dbReference type="NCBIfam" id="TIGR00450">
    <property type="entry name" value="mnmE_trmE_thdF"/>
    <property type="match status" value="1"/>
</dbReference>
<dbReference type="NCBIfam" id="TIGR00231">
    <property type="entry name" value="small_GTP"/>
    <property type="match status" value="1"/>
</dbReference>
<dbReference type="PANTHER" id="PTHR42714">
    <property type="entry name" value="TRNA MODIFICATION GTPASE GTPBP3"/>
    <property type="match status" value="1"/>
</dbReference>
<dbReference type="PANTHER" id="PTHR42714:SF2">
    <property type="entry name" value="TRNA MODIFICATION GTPASE GTPBP3, MITOCHONDRIAL"/>
    <property type="match status" value="1"/>
</dbReference>
<dbReference type="Pfam" id="PF01926">
    <property type="entry name" value="MMR_HSR1"/>
    <property type="match status" value="1"/>
</dbReference>
<dbReference type="Pfam" id="PF12631">
    <property type="entry name" value="MnmE_helical"/>
    <property type="match status" value="1"/>
</dbReference>
<dbReference type="Pfam" id="PF10396">
    <property type="entry name" value="TrmE_N"/>
    <property type="match status" value="1"/>
</dbReference>
<dbReference type="SUPFAM" id="SSF52540">
    <property type="entry name" value="P-loop containing nucleoside triphosphate hydrolases"/>
    <property type="match status" value="1"/>
</dbReference>
<dbReference type="PROSITE" id="PS51709">
    <property type="entry name" value="G_TRME"/>
    <property type="match status" value="1"/>
</dbReference>
<reference key="1">
    <citation type="journal article" date="2008" name="Genome Res.">
        <title>Chlamydia trachomatis: genome sequence analysis of lymphogranuloma venereum isolates.</title>
        <authorList>
            <person name="Thomson N.R."/>
            <person name="Holden M.T.G."/>
            <person name="Carder C."/>
            <person name="Lennard N."/>
            <person name="Lockey S.J."/>
            <person name="Marsh P."/>
            <person name="Skipp P."/>
            <person name="O'Connor C.D."/>
            <person name="Goodhead I."/>
            <person name="Norbertzcak H."/>
            <person name="Harris B."/>
            <person name="Ormond D."/>
            <person name="Rance R."/>
            <person name="Quail M.A."/>
            <person name="Parkhill J."/>
            <person name="Stephens R.S."/>
            <person name="Clarke I.N."/>
        </authorList>
    </citation>
    <scope>NUCLEOTIDE SEQUENCE [LARGE SCALE GENOMIC DNA]</scope>
    <source>
        <strain>ATCC VR-902B / DSM 19102 / 434/Bu</strain>
    </source>
</reference>
<gene>
    <name evidence="1" type="primary">mnmE</name>
    <name evidence="1" type="synonym">trmE</name>
    <name type="ordered locus">CTL0067</name>
</gene>
<keyword id="KW-0963">Cytoplasm</keyword>
<keyword id="KW-0342">GTP-binding</keyword>
<keyword id="KW-0378">Hydrolase</keyword>
<keyword id="KW-0460">Magnesium</keyword>
<keyword id="KW-0479">Metal-binding</keyword>
<keyword id="KW-0547">Nucleotide-binding</keyword>
<keyword id="KW-0630">Potassium</keyword>
<keyword id="KW-0819">tRNA processing</keyword>
<protein>
    <recommendedName>
        <fullName evidence="1">tRNA modification GTPase MnmE</fullName>
        <ecNumber evidence="1">3.6.-.-</ecNumber>
    </recommendedName>
</protein>
<comment type="function">
    <text evidence="1">Exhibits a very high intrinsic GTPase hydrolysis rate. Involved in the addition of a carboxymethylaminomethyl (cmnm) group at the wobble position (U34) of certain tRNAs, forming tRNA-cmnm(5)s(2)U34.</text>
</comment>
<comment type="cofactor">
    <cofactor evidence="1">
        <name>K(+)</name>
        <dbReference type="ChEBI" id="CHEBI:29103"/>
    </cofactor>
    <text evidence="1">Binds 1 potassium ion per subunit.</text>
</comment>
<comment type="subunit">
    <text evidence="1">Homodimer. Heterotetramer of two MnmE and two MnmG subunits.</text>
</comment>
<comment type="subcellular location">
    <subcellularLocation>
        <location evidence="1">Cytoplasm</location>
    </subcellularLocation>
</comment>
<comment type="similarity">
    <text evidence="1">Belongs to the TRAFAC class TrmE-Era-EngA-EngB-Septin-like GTPase superfamily. TrmE GTPase family.</text>
</comment>
<evidence type="ECO:0000255" key="1">
    <source>
        <dbReference type="HAMAP-Rule" id="MF_00379"/>
    </source>
</evidence>